<proteinExistence type="inferred from homology"/>
<protein>
    <recommendedName>
        <fullName>Evolved beta-galactosidase subunit beta</fullName>
    </recommendedName>
</protein>
<evidence type="ECO:0000250" key="1"/>
<gene>
    <name type="primary">ebgC</name>
    <name type="ordered locus">c3834</name>
</gene>
<accession>P0AC74</accession>
<accession>P24225</accession>
<feature type="chain" id="PRO_0000057653" description="Evolved beta-galactosidase subunit beta">
    <location>
        <begin position="1"/>
        <end position="149"/>
    </location>
</feature>
<keyword id="KW-1185">Reference proteome</keyword>
<organism>
    <name type="scientific">Escherichia coli O6:H1 (strain CFT073 / ATCC 700928 / UPEC)</name>
    <dbReference type="NCBI Taxonomy" id="199310"/>
    <lineage>
        <taxon>Bacteria</taxon>
        <taxon>Pseudomonadati</taxon>
        <taxon>Pseudomonadota</taxon>
        <taxon>Gammaproteobacteria</taxon>
        <taxon>Enterobacterales</taxon>
        <taxon>Enterobacteriaceae</taxon>
        <taxon>Escherichia</taxon>
    </lineage>
</organism>
<name>EBGC_ECOL6</name>
<comment type="function">
    <text evidence="1">Required for full activity of the EbgA enzyme. Exact function not known (By similarity).</text>
</comment>
<comment type="subunit">
    <text evidence="1">Heterooctamer of 4 alpha and 4 beta subunits.</text>
</comment>
<sequence>MRIIDNLEQFRQIYASGKKWQRCVEAIENIDNIQPGVAHSIGDSLTYRVETDSATDALFTGHRRYFEVHYYLQGQQKIEYAPKETLQVVEYYRDETDREYLKGCGETVEVHEGQIVICDIHEAYRFICNNAVKKVVLKVTIEDGYFHNK</sequence>
<dbReference type="EMBL" id="AE014075">
    <property type="protein sequence ID" value="AAN82279.1"/>
    <property type="molecule type" value="Genomic_DNA"/>
</dbReference>
<dbReference type="RefSeq" id="WP_001219954.1">
    <property type="nucleotide sequence ID" value="NZ_CP051263.1"/>
</dbReference>
<dbReference type="SMR" id="P0AC74"/>
<dbReference type="STRING" id="199310.c3834"/>
<dbReference type="KEGG" id="ecc:c3834"/>
<dbReference type="eggNOG" id="COG2731">
    <property type="taxonomic scope" value="Bacteria"/>
</dbReference>
<dbReference type="HOGENOM" id="CLU_146670_0_0_6"/>
<dbReference type="BioCyc" id="ECOL199310:C3834-MONOMER"/>
<dbReference type="Proteomes" id="UP000001410">
    <property type="component" value="Chromosome"/>
</dbReference>
<dbReference type="GO" id="GO:0005829">
    <property type="term" value="C:cytosol"/>
    <property type="evidence" value="ECO:0007669"/>
    <property type="project" value="TreeGrafter"/>
</dbReference>
<dbReference type="GO" id="GO:0044010">
    <property type="term" value="P:single-species biofilm formation"/>
    <property type="evidence" value="ECO:0007669"/>
    <property type="project" value="TreeGrafter"/>
</dbReference>
<dbReference type="Gene3D" id="2.60.120.370">
    <property type="entry name" value="YhcH/YjgK/YiaL"/>
    <property type="match status" value="1"/>
</dbReference>
<dbReference type="InterPro" id="IPR004375">
    <property type="entry name" value="NanQ/TabA/YiaL"/>
</dbReference>
<dbReference type="InterPro" id="IPR037012">
    <property type="entry name" value="NanQ/TabA/YiaL_sf"/>
</dbReference>
<dbReference type="NCBIfam" id="NF007571">
    <property type="entry name" value="PRK10202.1"/>
    <property type="match status" value="1"/>
</dbReference>
<dbReference type="PANTHER" id="PTHR34986">
    <property type="entry name" value="EVOLVED BETA-GALACTOSIDASE SUBUNIT BETA"/>
    <property type="match status" value="1"/>
</dbReference>
<dbReference type="PANTHER" id="PTHR34986:SF4">
    <property type="entry name" value="EVOLVED BETA-GALACTOSIDASE SUBUNIT BETA-RELATED"/>
    <property type="match status" value="1"/>
</dbReference>
<dbReference type="Pfam" id="PF04074">
    <property type="entry name" value="DUF386"/>
    <property type="match status" value="1"/>
</dbReference>
<dbReference type="SUPFAM" id="SSF51197">
    <property type="entry name" value="Clavaminate synthase-like"/>
    <property type="match status" value="1"/>
</dbReference>
<reference key="1">
    <citation type="journal article" date="2002" name="Proc. Natl. Acad. Sci. U.S.A.">
        <title>Extensive mosaic structure revealed by the complete genome sequence of uropathogenic Escherichia coli.</title>
        <authorList>
            <person name="Welch R.A."/>
            <person name="Burland V."/>
            <person name="Plunkett G. III"/>
            <person name="Redford P."/>
            <person name="Roesch P."/>
            <person name="Rasko D."/>
            <person name="Buckles E.L."/>
            <person name="Liou S.-R."/>
            <person name="Boutin A."/>
            <person name="Hackett J."/>
            <person name="Stroud D."/>
            <person name="Mayhew G.F."/>
            <person name="Rose D.J."/>
            <person name="Zhou S."/>
            <person name="Schwartz D.C."/>
            <person name="Perna N.T."/>
            <person name="Mobley H.L.T."/>
            <person name="Donnenberg M.S."/>
            <person name="Blattner F.R."/>
        </authorList>
    </citation>
    <scope>NUCLEOTIDE SEQUENCE [LARGE SCALE GENOMIC DNA]</scope>
    <source>
        <strain>CFT073 / ATCC 700928 / UPEC</strain>
    </source>
</reference>